<protein>
    <recommendedName>
        <fullName evidence="1">Large ribosomal subunit protein uL14</fullName>
    </recommendedName>
    <alternativeName>
        <fullName evidence="2">50S ribosomal protein L14</fullName>
    </alternativeName>
</protein>
<proteinExistence type="inferred from homology"/>
<sequence length="122" mass="13243">MIQMQSILEVADNSGAKKVMCIKVLGGSHHMVAKLGDVIVVSVKEAIPGGKVKKGDVYKGVIVRTKTGVVRPDGSTIKFDKNALVLLNKQDEPIGTRVFGPVTRELRAKKYVRIMSLAEEVL</sequence>
<reference key="1">
    <citation type="journal article" date="2005" name="PLoS Biol.">
        <title>The genome sequence of Rickettsia felis identifies the first putative conjugative plasmid in an obligate intracellular parasite.</title>
        <authorList>
            <person name="Ogata H."/>
            <person name="Renesto P."/>
            <person name="Audic S."/>
            <person name="Robert C."/>
            <person name="Blanc G."/>
            <person name="Fournier P.-E."/>
            <person name="Parinello H."/>
            <person name="Claverie J.-M."/>
            <person name="Raoult D."/>
        </authorList>
    </citation>
    <scope>NUCLEOTIDE SEQUENCE [LARGE SCALE GENOMIC DNA]</scope>
    <source>
        <strain>ATCC VR-1525 / URRWXCal2</strain>
    </source>
</reference>
<dbReference type="EMBL" id="CP000053">
    <property type="protein sequence ID" value="AAY61139.1"/>
    <property type="molecule type" value="Genomic_DNA"/>
</dbReference>
<dbReference type="SMR" id="Q4UMR9"/>
<dbReference type="STRING" id="315456.RF_0288"/>
<dbReference type="KEGG" id="rfe:RF_0288"/>
<dbReference type="eggNOG" id="COG0093">
    <property type="taxonomic scope" value="Bacteria"/>
</dbReference>
<dbReference type="HOGENOM" id="CLU_095071_2_1_5"/>
<dbReference type="OrthoDB" id="9806379at2"/>
<dbReference type="Proteomes" id="UP000008548">
    <property type="component" value="Chromosome"/>
</dbReference>
<dbReference type="GO" id="GO:0022625">
    <property type="term" value="C:cytosolic large ribosomal subunit"/>
    <property type="evidence" value="ECO:0007669"/>
    <property type="project" value="TreeGrafter"/>
</dbReference>
<dbReference type="GO" id="GO:0070180">
    <property type="term" value="F:large ribosomal subunit rRNA binding"/>
    <property type="evidence" value="ECO:0007669"/>
    <property type="project" value="TreeGrafter"/>
</dbReference>
<dbReference type="GO" id="GO:0003735">
    <property type="term" value="F:structural constituent of ribosome"/>
    <property type="evidence" value="ECO:0007669"/>
    <property type="project" value="InterPro"/>
</dbReference>
<dbReference type="GO" id="GO:0006412">
    <property type="term" value="P:translation"/>
    <property type="evidence" value="ECO:0007669"/>
    <property type="project" value="UniProtKB-UniRule"/>
</dbReference>
<dbReference type="CDD" id="cd00337">
    <property type="entry name" value="Ribosomal_uL14"/>
    <property type="match status" value="1"/>
</dbReference>
<dbReference type="FunFam" id="2.40.150.20:FF:000001">
    <property type="entry name" value="50S ribosomal protein L14"/>
    <property type="match status" value="1"/>
</dbReference>
<dbReference type="Gene3D" id="2.40.150.20">
    <property type="entry name" value="Ribosomal protein L14"/>
    <property type="match status" value="1"/>
</dbReference>
<dbReference type="HAMAP" id="MF_01367">
    <property type="entry name" value="Ribosomal_uL14"/>
    <property type="match status" value="1"/>
</dbReference>
<dbReference type="InterPro" id="IPR000218">
    <property type="entry name" value="Ribosomal_uL14"/>
</dbReference>
<dbReference type="InterPro" id="IPR005745">
    <property type="entry name" value="Ribosomal_uL14_bac-type"/>
</dbReference>
<dbReference type="InterPro" id="IPR019972">
    <property type="entry name" value="Ribosomal_uL14_CS"/>
</dbReference>
<dbReference type="InterPro" id="IPR036853">
    <property type="entry name" value="Ribosomal_uL14_sf"/>
</dbReference>
<dbReference type="NCBIfam" id="TIGR01067">
    <property type="entry name" value="rplN_bact"/>
    <property type="match status" value="1"/>
</dbReference>
<dbReference type="PANTHER" id="PTHR11761">
    <property type="entry name" value="50S/60S RIBOSOMAL PROTEIN L14/L23"/>
    <property type="match status" value="1"/>
</dbReference>
<dbReference type="PANTHER" id="PTHR11761:SF3">
    <property type="entry name" value="LARGE RIBOSOMAL SUBUNIT PROTEIN UL14M"/>
    <property type="match status" value="1"/>
</dbReference>
<dbReference type="Pfam" id="PF00238">
    <property type="entry name" value="Ribosomal_L14"/>
    <property type="match status" value="1"/>
</dbReference>
<dbReference type="SMART" id="SM01374">
    <property type="entry name" value="Ribosomal_L14"/>
    <property type="match status" value="1"/>
</dbReference>
<dbReference type="SUPFAM" id="SSF50193">
    <property type="entry name" value="Ribosomal protein L14"/>
    <property type="match status" value="1"/>
</dbReference>
<dbReference type="PROSITE" id="PS00049">
    <property type="entry name" value="RIBOSOMAL_L14"/>
    <property type="match status" value="1"/>
</dbReference>
<gene>
    <name evidence="1" type="primary">rplN</name>
    <name type="ordered locus">RF_0288</name>
</gene>
<feature type="chain" id="PRO_0000272388" description="Large ribosomal subunit protein uL14">
    <location>
        <begin position="1"/>
        <end position="122"/>
    </location>
</feature>
<organism>
    <name type="scientific">Rickettsia felis (strain ATCC VR-1525 / URRWXCal2)</name>
    <name type="common">Rickettsia azadi</name>
    <dbReference type="NCBI Taxonomy" id="315456"/>
    <lineage>
        <taxon>Bacteria</taxon>
        <taxon>Pseudomonadati</taxon>
        <taxon>Pseudomonadota</taxon>
        <taxon>Alphaproteobacteria</taxon>
        <taxon>Rickettsiales</taxon>
        <taxon>Rickettsiaceae</taxon>
        <taxon>Rickettsieae</taxon>
        <taxon>Rickettsia</taxon>
        <taxon>spotted fever group</taxon>
    </lineage>
</organism>
<keyword id="KW-0687">Ribonucleoprotein</keyword>
<keyword id="KW-0689">Ribosomal protein</keyword>
<keyword id="KW-0694">RNA-binding</keyword>
<keyword id="KW-0699">rRNA-binding</keyword>
<name>RL14_RICFE</name>
<comment type="function">
    <text evidence="1">Binds to 23S rRNA. Forms part of two intersubunit bridges in the 70S ribosome.</text>
</comment>
<comment type="subunit">
    <text evidence="1">Part of the 50S ribosomal subunit. Forms a cluster with proteins L3 and L19. In the 70S ribosome, L14 and L19 interact and together make contacts with the 16S rRNA in bridges B5 and B8.</text>
</comment>
<comment type="similarity">
    <text evidence="1">Belongs to the universal ribosomal protein uL14 family.</text>
</comment>
<evidence type="ECO:0000255" key="1">
    <source>
        <dbReference type="HAMAP-Rule" id="MF_01367"/>
    </source>
</evidence>
<evidence type="ECO:0000305" key="2"/>
<accession>Q4UMR9</accession>